<organism>
    <name type="scientific">Gloeobacter violaceus (strain ATCC 29082 / PCC 7421)</name>
    <dbReference type="NCBI Taxonomy" id="251221"/>
    <lineage>
        <taxon>Bacteria</taxon>
        <taxon>Bacillati</taxon>
        <taxon>Cyanobacteriota</taxon>
        <taxon>Cyanophyceae</taxon>
        <taxon>Gloeobacterales</taxon>
        <taxon>Gloeobacteraceae</taxon>
        <taxon>Gloeobacter</taxon>
    </lineage>
</organism>
<proteinExistence type="inferred from homology"/>
<protein>
    <recommendedName>
        <fullName>15,16-dihydrobiliverdin:ferredoxin oxidoreductase</fullName>
        <ecNumber>1.3.7.2</ecNumber>
    </recommendedName>
</protein>
<dbReference type="EC" id="1.3.7.2"/>
<dbReference type="EMBL" id="BA000045">
    <property type="protein sequence ID" value="BAC89201.1"/>
    <property type="status" value="ALT_INIT"/>
    <property type="molecule type" value="Genomic_DNA"/>
</dbReference>
<dbReference type="RefSeq" id="NP_924206.2">
    <property type="nucleotide sequence ID" value="NC_005125.1"/>
</dbReference>
<dbReference type="RefSeq" id="WP_011141260.1">
    <property type="nucleotide sequence ID" value="NC_005125.1"/>
</dbReference>
<dbReference type="SMR" id="Q7NL66"/>
<dbReference type="STRING" id="251221.gene:10758741"/>
<dbReference type="EnsemblBacteria" id="BAC89201">
    <property type="protein sequence ID" value="BAC89201"/>
    <property type="gene ID" value="BAC89201"/>
</dbReference>
<dbReference type="KEGG" id="gvi:glr1260"/>
<dbReference type="PATRIC" id="fig|251221.4.peg.1282"/>
<dbReference type="eggNOG" id="ENOG502Z8J9">
    <property type="taxonomic scope" value="Bacteria"/>
</dbReference>
<dbReference type="HOGENOM" id="CLU_086208_0_0_3"/>
<dbReference type="InParanoid" id="Q7NL66"/>
<dbReference type="OrthoDB" id="421401at2"/>
<dbReference type="PhylomeDB" id="Q7NL66"/>
<dbReference type="Proteomes" id="UP000000557">
    <property type="component" value="Chromosome"/>
</dbReference>
<dbReference type="GO" id="GO:0050617">
    <property type="term" value="F:15,16-dihydrobiliverdin:ferredoxin oxidoreductase activity"/>
    <property type="evidence" value="ECO:0007669"/>
    <property type="project" value="UniProtKB-UniRule"/>
</dbReference>
<dbReference type="GO" id="GO:0050897">
    <property type="term" value="F:cobalt ion binding"/>
    <property type="evidence" value="ECO:0007669"/>
    <property type="project" value="InterPro"/>
</dbReference>
<dbReference type="GO" id="GO:0010024">
    <property type="term" value="P:phytochromobilin biosynthetic process"/>
    <property type="evidence" value="ECO:0007669"/>
    <property type="project" value="InterPro"/>
</dbReference>
<dbReference type="Gene3D" id="3.40.1500.20">
    <property type="match status" value="1"/>
</dbReference>
<dbReference type="HAMAP" id="MF_00792">
    <property type="entry name" value="PebA"/>
    <property type="match status" value="1"/>
</dbReference>
<dbReference type="InterPro" id="IPR023658">
    <property type="entry name" value="DiHydbiliverdin_OxRdtase"/>
</dbReference>
<dbReference type="InterPro" id="IPR009249">
    <property type="entry name" value="Ferredoxin-dep_bilin_Rdtase"/>
</dbReference>
<dbReference type="NCBIfam" id="NF009720">
    <property type="entry name" value="PRK13247.1"/>
    <property type="match status" value="1"/>
</dbReference>
<dbReference type="PANTHER" id="PTHR34557">
    <property type="entry name" value="PHYTOCHROMOBILIN:FERREDOXIN OXIDOREDUCTASE, CHLOROPLASTIC"/>
    <property type="match status" value="1"/>
</dbReference>
<dbReference type="PANTHER" id="PTHR34557:SF1">
    <property type="entry name" value="PHYTOCHROMOBILIN:FERREDOXIN OXIDOREDUCTASE, CHLOROPLASTIC"/>
    <property type="match status" value="1"/>
</dbReference>
<dbReference type="Pfam" id="PF05996">
    <property type="entry name" value="Fe_bilin_red"/>
    <property type="match status" value="1"/>
</dbReference>
<gene>
    <name type="primary">pebA</name>
    <name type="ordered locus">glr1260</name>
</gene>
<comment type="function">
    <text evidence="1">Catalyzes the two-electron reduction of biliverdin IX-alpha at the C15 methine bridge.</text>
</comment>
<comment type="catalytic activity">
    <reaction>
        <text>15,16-dihydrobiliverdin + oxidized 2[4Fe-4S]-[ferredoxin] = biliverdin IXalpha + reduced 2[4Fe-4S]-[ferredoxin] + 2 H(+)</text>
        <dbReference type="Rhea" id="RHEA:10168"/>
        <dbReference type="Rhea" id="RHEA-COMP:10002"/>
        <dbReference type="Rhea" id="RHEA-COMP:10004"/>
        <dbReference type="ChEBI" id="CHEBI:15378"/>
        <dbReference type="ChEBI" id="CHEBI:33722"/>
        <dbReference type="ChEBI" id="CHEBI:33723"/>
        <dbReference type="ChEBI" id="CHEBI:57899"/>
        <dbReference type="ChEBI" id="CHEBI:57991"/>
        <dbReference type="EC" id="1.3.7.2"/>
    </reaction>
</comment>
<comment type="similarity">
    <text evidence="2">Belongs to the HY2 family.</text>
</comment>
<comment type="sequence caution" evidence="2">
    <conflict type="erroneous initiation">
        <sequence resource="EMBL-CDS" id="BAC89201"/>
    </conflict>
</comment>
<keyword id="KW-0560">Oxidoreductase</keyword>
<keyword id="KW-1185">Reference proteome</keyword>
<reference key="1">
    <citation type="journal article" date="2003" name="DNA Res.">
        <title>Complete genome structure of Gloeobacter violaceus PCC 7421, a cyanobacterium that lacks thylakoids.</title>
        <authorList>
            <person name="Nakamura Y."/>
            <person name="Kaneko T."/>
            <person name="Sato S."/>
            <person name="Mimuro M."/>
            <person name="Miyashita H."/>
            <person name="Tsuchiya T."/>
            <person name="Sasamoto S."/>
            <person name="Watanabe A."/>
            <person name="Kawashima K."/>
            <person name="Kishida Y."/>
            <person name="Kiyokawa C."/>
            <person name="Kohara M."/>
            <person name="Matsumoto M."/>
            <person name="Matsuno A."/>
            <person name="Nakazaki N."/>
            <person name="Shimpo S."/>
            <person name="Takeuchi C."/>
            <person name="Yamada M."/>
            <person name="Tabata S."/>
        </authorList>
    </citation>
    <scope>NUCLEOTIDE SEQUENCE [LARGE SCALE GENOMIC DNA]</scope>
    <source>
        <strain>ATCC 29082 / PCC 7421</strain>
    </source>
</reference>
<accession>Q7NL66</accession>
<evidence type="ECO:0000250" key="1"/>
<evidence type="ECO:0000305" key="2"/>
<feature type="chain" id="PRO_0000216724" description="15,16-dihydrobiliverdin:ferredoxin oxidoreductase">
    <location>
        <begin position="1"/>
        <end position="244"/>
    </location>
</feature>
<name>PEBA_GLOVI</name>
<sequence length="244" mass="28515">MYRPFLEHLQQKLQSSFDLQSLTIPAGLDYRISERGRESTTIRSWCYTCSELRKIRYTYIDGGEHAQVFNSVIYPAHRYDLPLLGIDLLAFGKKKNLIVLDFQPLFRDKAYLARYIEPMRILRERYGDVAQDVEMKFYDANQYFSKYLLFARTDAETVAGRVFTAYCDYLDLYWQLLASAAPLGDAQDIRRIVKAQKDYDQYSADRDPASGLFSSYFGHEWAERFLYEFLFEDAVPLAVGQPGR</sequence>